<name>UBIG_SALTI</name>
<feature type="chain" id="PRO_0000193401" description="Ubiquinone biosynthesis O-methyltransferase">
    <location>
        <begin position="1"/>
        <end position="242"/>
    </location>
</feature>
<feature type="binding site" evidence="1">
    <location>
        <position position="44"/>
    </location>
    <ligand>
        <name>S-adenosyl-L-methionine</name>
        <dbReference type="ChEBI" id="CHEBI:59789"/>
    </ligand>
</feature>
<feature type="binding site" evidence="1">
    <location>
        <position position="64"/>
    </location>
    <ligand>
        <name>S-adenosyl-L-methionine</name>
        <dbReference type="ChEBI" id="CHEBI:59789"/>
    </ligand>
</feature>
<feature type="binding site" evidence="1">
    <location>
        <position position="85"/>
    </location>
    <ligand>
        <name>S-adenosyl-L-methionine</name>
        <dbReference type="ChEBI" id="CHEBI:59789"/>
    </ligand>
</feature>
<feature type="binding site" evidence="1">
    <location>
        <position position="129"/>
    </location>
    <ligand>
        <name>S-adenosyl-L-methionine</name>
        <dbReference type="ChEBI" id="CHEBI:59789"/>
    </ligand>
</feature>
<reference key="1">
    <citation type="journal article" date="2001" name="Nature">
        <title>Complete genome sequence of a multiple drug resistant Salmonella enterica serovar Typhi CT18.</title>
        <authorList>
            <person name="Parkhill J."/>
            <person name="Dougan G."/>
            <person name="James K.D."/>
            <person name="Thomson N.R."/>
            <person name="Pickard D."/>
            <person name="Wain J."/>
            <person name="Churcher C.M."/>
            <person name="Mungall K.L."/>
            <person name="Bentley S.D."/>
            <person name="Holden M.T.G."/>
            <person name="Sebaihia M."/>
            <person name="Baker S."/>
            <person name="Basham D."/>
            <person name="Brooks K."/>
            <person name="Chillingworth T."/>
            <person name="Connerton P."/>
            <person name="Cronin A."/>
            <person name="Davis P."/>
            <person name="Davies R.M."/>
            <person name="Dowd L."/>
            <person name="White N."/>
            <person name="Farrar J."/>
            <person name="Feltwell T."/>
            <person name="Hamlin N."/>
            <person name="Haque A."/>
            <person name="Hien T.T."/>
            <person name="Holroyd S."/>
            <person name="Jagels K."/>
            <person name="Krogh A."/>
            <person name="Larsen T.S."/>
            <person name="Leather S."/>
            <person name="Moule S."/>
            <person name="O'Gaora P."/>
            <person name="Parry C."/>
            <person name="Quail M.A."/>
            <person name="Rutherford K.M."/>
            <person name="Simmonds M."/>
            <person name="Skelton J."/>
            <person name="Stevens K."/>
            <person name="Whitehead S."/>
            <person name="Barrell B.G."/>
        </authorList>
    </citation>
    <scope>NUCLEOTIDE SEQUENCE [LARGE SCALE GENOMIC DNA]</scope>
    <source>
        <strain>CT18</strain>
    </source>
</reference>
<reference key="2">
    <citation type="journal article" date="2003" name="J. Bacteriol.">
        <title>Comparative genomics of Salmonella enterica serovar Typhi strains Ty2 and CT18.</title>
        <authorList>
            <person name="Deng W."/>
            <person name="Liou S.-R."/>
            <person name="Plunkett G. III"/>
            <person name="Mayhew G.F."/>
            <person name="Rose D.J."/>
            <person name="Burland V."/>
            <person name="Kodoyianni V."/>
            <person name="Schwartz D.C."/>
            <person name="Blattner F.R."/>
        </authorList>
    </citation>
    <scope>NUCLEOTIDE SEQUENCE [LARGE SCALE GENOMIC DNA]</scope>
    <source>
        <strain>ATCC 700931 / Ty2</strain>
    </source>
</reference>
<gene>
    <name evidence="1" type="primary">ubiG</name>
    <name type="ordered locus">STY2505</name>
    <name type="ordered locus">t0588</name>
</gene>
<keyword id="KW-0489">Methyltransferase</keyword>
<keyword id="KW-0949">S-adenosyl-L-methionine</keyword>
<keyword id="KW-0808">Transferase</keyword>
<keyword id="KW-0831">Ubiquinone biosynthesis</keyword>
<proteinExistence type="inferred from homology"/>
<accession>Q8Z560</accession>
<protein>
    <recommendedName>
        <fullName evidence="1">Ubiquinone biosynthesis O-methyltransferase</fullName>
    </recommendedName>
    <alternativeName>
        <fullName evidence="1">2-polyprenyl-6-hydroxyphenol methylase</fullName>
        <ecNumber evidence="1">2.1.1.222</ecNumber>
    </alternativeName>
    <alternativeName>
        <fullName evidence="1">3-demethylubiquinone 3-O-methyltransferase</fullName>
        <ecNumber evidence="1">2.1.1.64</ecNumber>
    </alternativeName>
</protein>
<sequence length="242" mass="26853">MNTEKPSVAHNVDHNEIAKFEAVASRWWDLKGEFKPLHRINPLRLGYITERSGGLFGKKVLDVGCGGGILAESMAREGATVTGLDMGFEPLQVAKLHALESGIEVEYVQETVEEHAAKHAQQYDVVTCMEMLEHVPDPQSVVHACAQLVKPGGEVFFSTLNRNGKSWLMAVVGAEYILRMVPKGTHDVKKFIKPAELLSWVDETVLKEQHITGLHYNPITNTFKLGPGVDVNYMLHTRAKKA</sequence>
<evidence type="ECO:0000255" key="1">
    <source>
        <dbReference type="HAMAP-Rule" id="MF_00472"/>
    </source>
</evidence>
<comment type="function">
    <text evidence="1">O-methyltransferase that catalyzes the 2 O-methylation steps in the ubiquinone biosynthetic pathway.</text>
</comment>
<comment type="catalytic activity">
    <reaction evidence="1">
        <text>a 3-demethylubiquinol + S-adenosyl-L-methionine = a ubiquinol + S-adenosyl-L-homocysteine + H(+)</text>
        <dbReference type="Rhea" id="RHEA:44380"/>
        <dbReference type="Rhea" id="RHEA-COMP:9566"/>
        <dbReference type="Rhea" id="RHEA-COMP:10914"/>
        <dbReference type="ChEBI" id="CHEBI:15378"/>
        <dbReference type="ChEBI" id="CHEBI:17976"/>
        <dbReference type="ChEBI" id="CHEBI:57856"/>
        <dbReference type="ChEBI" id="CHEBI:59789"/>
        <dbReference type="ChEBI" id="CHEBI:84422"/>
        <dbReference type="EC" id="2.1.1.64"/>
    </reaction>
</comment>
<comment type="catalytic activity">
    <reaction evidence="1">
        <text>a 3-(all-trans-polyprenyl)benzene-1,2-diol + S-adenosyl-L-methionine = a 2-methoxy-6-(all-trans-polyprenyl)phenol + S-adenosyl-L-homocysteine + H(+)</text>
        <dbReference type="Rhea" id="RHEA:31411"/>
        <dbReference type="Rhea" id="RHEA-COMP:9550"/>
        <dbReference type="Rhea" id="RHEA-COMP:9551"/>
        <dbReference type="ChEBI" id="CHEBI:15378"/>
        <dbReference type="ChEBI" id="CHEBI:57856"/>
        <dbReference type="ChEBI" id="CHEBI:59789"/>
        <dbReference type="ChEBI" id="CHEBI:62729"/>
        <dbReference type="ChEBI" id="CHEBI:62731"/>
        <dbReference type="EC" id="2.1.1.222"/>
    </reaction>
</comment>
<comment type="pathway">
    <text evidence="1">Cofactor biosynthesis; ubiquinone biosynthesis.</text>
</comment>
<comment type="similarity">
    <text evidence="1">Belongs to the methyltransferase superfamily. UbiG/COQ3 family.</text>
</comment>
<dbReference type="EC" id="2.1.1.222" evidence="1"/>
<dbReference type="EC" id="2.1.1.64" evidence="1"/>
<dbReference type="EMBL" id="AL513382">
    <property type="protein sequence ID" value="CAD07508.1"/>
    <property type="molecule type" value="Genomic_DNA"/>
</dbReference>
<dbReference type="EMBL" id="AE014613">
    <property type="protein sequence ID" value="AAO68294.1"/>
    <property type="molecule type" value="Genomic_DNA"/>
</dbReference>
<dbReference type="RefSeq" id="NP_456819.1">
    <property type="nucleotide sequence ID" value="NC_003198.1"/>
</dbReference>
<dbReference type="RefSeq" id="WP_001091011.1">
    <property type="nucleotide sequence ID" value="NZ_WSUR01000057.1"/>
</dbReference>
<dbReference type="SMR" id="Q8Z560"/>
<dbReference type="STRING" id="220341.gene:17586405"/>
<dbReference type="KEGG" id="stt:t0588"/>
<dbReference type="KEGG" id="sty:STY2505"/>
<dbReference type="PATRIC" id="fig|220341.7.peg.2536"/>
<dbReference type="eggNOG" id="COG2227">
    <property type="taxonomic scope" value="Bacteria"/>
</dbReference>
<dbReference type="HOGENOM" id="CLU_042432_5_0_6"/>
<dbReference type="OMA" id="LASRWWD"/>
<dbReference type="OrthoDB" id="9801538at2"/>
<dbReference type="UniPathway" id="UPA00232"/>
<dbReference type="Proteomes" id="UP000000541">
    <property type="component" value="Chromosome"/>
</dbReference>
<dbReference type="Proteomes" id="UP000002670">
    <property type="component" value="Chromosome"/>
</dbReference>
<dbReference type="GO" id="GO:0102208">
    <property type="term" value="F:2-polyprenyl-6-hydroxyphenol methylase activity"/>
    <property type="evidence" value="ECO:0007669"/>
    <property type="project" value="UniProtKB-EC"/>
</dbReference>
<dbReference type="GO" id="GO:0061542">
    <property type="term" value="F:3-demethylubiquinol 3-O-methyltransferase activity"/>
    <property type="evidence" value="ECO:0007669"/>
    <property type="project" value="UniProtKB-UniRule"/>
</dbReference>
<dbReference type="GO" id="GO:0010420">
    <property type="term" value="F:polyprenyldihydroxybenzoate methyltransferase activity"/>
    <property type="evidence" value="ECO:0007669"/>
    <property type="project" value="InterPro"/>
</dbReference>
<dbReference type="GO" id="GO:0032259">
    <property type="term" value="P:methylation"/>
    <property type="evidence" value="ECO:0007669"/>
    <property type="project" value="UniProtKB-KW"/>
</dbReference>
<dbReference type="CDD" id="cd02440">
    <property type="entry name" value="AdoMet_MTases"/>
    <property type="match status" value="1"/>
</dbReference>
<dbReference type="FunFam" id="3.40.50.150:FF:000028">
    <property type="entry name" value="Ubiquinone biosynthesis O-methyltransferase"/>
    <property type="match status" value="1"/>
</dbReference>
<dbReference type="Gene3D" id="3.40.50.150">
    <property type="entry name" value="Vaccinia Virus protein VP39"/>
    <property type="match status" value="1"/>
</dbReference>
<dbReference type="HAMAP" id="MF_00472">
    <property type="entry name" value="UbiG"/>
    <property type="match status" value="1"/>
</dbReference>
<dbReference type="InterPro" id="IPR029063">
    <property type="entry name" value="SAM-dependent_MTases_sf"/>
</dbReference>
<dbReference type="InterPro" id="IPR010233">
    <property type="entry name" value="UbiG_MeTrfase"/>
</dbReference>
<dbReference type="NCBIfam" id="TIGR01983">
    <property type="entry name" value="UbiG"/>
    <property type="match status" value="1"/>
</dbReference>
<dbReference type="PANTHER" id="PTHR43464">
    <property type="entry name" value="METHYLTRANSFERASE"/>
    <property type="match status" value="1"/>
</dbReference>
<dbReference type="PANTHER" id="PTHR43464:SF19">
    <property type="entry name" value="UBIQUINONE BIOSYNTHESIS O-METHYLTRANSFERASE, MITOCHONDRIAL"/>
    <property type="match status" value="1"/>
</dbReference>
<dbReference type="Pfam" id="PF13489">
    <property type="entry name" value="Methyltransf_23"/>
    <property type="match status" value="1"/>
</dbReference>
<dbReference type="SUPFAM" id="SSF53335">
    <property type="entry name" value="S-adenosyl-L-methionine-dependent methyltransferases"/>
    <property type="match status" value="1"/>
</dbReference>
<organism>
    <name type="scientific">Salmonella typhi</name>
    <dbReference type="NCBI Taxonomy" id="90370"/>
    <lineage>
        <taxon>Bacteria</taxon>
        <taxon>Pseudomonadati</taxon>
        <taxon>Pseudomonadota</taxon>
        <taxon>Gammaproteobacteria</taxon>
        <taxon>Enterobacterales</taxon>
        <taxon>Enterobacteriaceae</taxon>
        <taxon>Salmonella</taxon>
    </lineage>
</organism>